<evidence type="ECO:0000255" key="1">
    <source>
        <dbReference type="HAMAP-Rule" id="MF_00194"/>
    </source>
</evidence>
<comment type="function">
    <text evidence="1">May be involved in recombination.</text>
</comment>
<comment type="subcellular location">
    <subcellularLocation>
        <location evidence="1">Cytoplasm</location>
        <location evidence="1">Nucleoid</location>
    </subcellularLocation>
</comment>
<comment type="similarity">
    <text evidence="1">Belongs to the RdgC family.</text>
</comment>
<proteinExistence type="inferred from homology"/>
<keyword id="KW-0963">Cytoplasm</keyword>
<keyword id="KW-0233">DNA recombination</keyword>
<keyword id="KW-1185">Reference proteome</keyword>
<organism>
    <name type="scientific">Paraburkholderia phymatum (strain DSM 17167 / CIP 108236 / LMG 21445 / STM815)</name>
    <name type="common">Burkholderia phymatum</name>
    <dbReference type="NCBI Taxonomy" id="391038"/>
    <lineage>
        <taxon>Bacteria</taxon>
        <taxon>Pseudomonadati</taxon>
        <taxon>Pseudomonadota</taxon>
        <taxon>Betaproteobacteria</taxon>
        <taxon>Burkholderiales</taxon>
        <taxon>Burkholderiaceae</taxon>
        <taxon>Paraburkholderia</taxon>
    </lineage>
</organism>
<name>RDGC_PARP8</name>
<dbReference type="EMBL" id="CP001044">
    <property type="protein sequence ID" value="ACC73847.1"/>
    <property type="molecule type" value="Genomic_DNA"/>
</dbReference>
<dbReference type="RefSeq" id="WP_012404016.1">
    <property type="nucleotide sequence ID" value="NC_010623.1"/>
</dbReference>
<dbReference type="SMR" id="B2JRS8"/>
<dbReference type="STRING" id="391038.Bphy_4738"/>
<dbReference type="KEGG" id="bph:Bphy_4738"/>
<dbReference type="eggNOG" id="COG2974">
    <property type="taxonomic scope" value="Bacteria"/>
</dbReference>
<dbReference type="HOGENOM" id="CLU_052038_1_1_4"/>
<dbReference type="OrthoDB" id="5290530at2"/>
<dbReference type="Proteomes" id="UP000001192">
    <property type="component" value="Chromosome 2"/>
</dbReference>
<dbReference type="GO" id="GO:0043590">
    <property type="term" value="C:bacterial nucleoid"/>
    <property type="evidence" value="ECO:0007669"/>
    <property type="project" value="TreeGrafter"/>
</dbReference>
<dbReference type="GO" id="GO:0005737">
    <property type="term" value="C:cytoplasm"/>
    <property type="evidence" value="ECO:0007669"/>
    <property type="project" value="UniProtKB-UniRule"/>
</dbReference>
<dbReference type="GO" id="GO:0003690">
    <property type="term" value="F:double-stranded DNA binding"/>
    <property type="evidence" value="ECO:0007669"/>
    <property type="project" value="TreeGrafter"/>
</dbReference>
<dbReference type="GO" id="GO:0006310">
    <property type="term" value="P:DNA recombination"/>
    <property type="evidence" value="ECO:0007669"/>
    <property type="project" value="UniProtKB-UniRule"/>
</dbReference>
<dbReference type="GO" id="GO:0000018">
    <property type="term" value="P:regulation of DNA recombination"/>
    <property type="evidence" value="ECO:0007669"/>
    <property type="project" value="TreeGrafter"/>
</dbReference>
<dbReference type="HAMAP" id="MF_00194">
    <property type="entry name" value="RdgC"/>
    <property type="match status" value="1"/>
</dbReference>
<dbReference type="InterPro" id="IPR007476">
    <property type="entry name" value="RdgC"/>
</dbReference>
<dbReference type="NCBIfam" id="NF001463">
    <property type="entry name" value="PRK00321.1-4"/>
    <property type="match status" value="1"/>
</dbReference>
<dbReference type="NCBIfam" id="NF001464">
    <property type="entry name" value="PRK00321.1-5"/>
    <property type="match status" value="1"/>
</dbReference>
<dbReference type="PANTHER" id="PTHR38103">
    <property type="entry name" value="RECOMBINATION-ASSOCIATED PROTEIN RDGC"/>
    <property type="match status" value="1"/>
</dbReference>
<dbReference type="PANTHER" id="PTHR38103:SF1">
    <property type="entry name" value="RECOMBINATION-ASSOCIATED PROTEIN RDGC"/>
    <property type="match status" value="1"/>
</dbReference>
<dbReference type="Pfam" id="PF04381">
    <property type="entry name" value="RdgC"/>
    <property type="match status" value="1"/>
</dbReference>
<reference key="1">
    <citation type="journal article" date="2014" name="Stand. Genomic Sci.">
        <title>Complete genome sequence of Burkholderia phymatum STM815(T), a broad host range and efficient nitrogen-fixing symbiont of Mimosa species.</title>
        <authorList>
            <person name="Moulin L."/>
            <person name="Klonowska A."/>
            <person name="Caroline B."/>
            <person name="Booth K."/>
            <person name="Vriezen J.A."/>
            <person name="Melkonian R."/>
            <person name="James E.K."/>
            <person name="Young J.P."/>
            <person name="Bena G."/>
            <person name="Hauser L."/>
            <person name="Land M."/>
            <person name="Kyrpides N."/>
            <person name="Bruce D."/>
            <person name="Chain P."/>
            <person name="Copeland A."/>
            <person name="Pitluck S."/>
            <person name="Woyke T."/>
            <person name="Lizotte-Waniewski M."/>
            <person name="Bristow J."/>
            <person name="Riley M."/>
        </authorList>
    </citation>
    <scope>NUCLEOTIDE SEQUENCE [LARGE SCALE GENOMIC DNA]</scope>
    <source>
        <strain>DSM 17167 / CIP 108236 / LMG 21445 / STM815</strain>
    </source>
</reference>
<accession>B2JRS8</accession>
<feature type="chain" id="PRO_1000099058" description="Recombination-associated protein RdgC">
    <location>
        <begin position="1"/>
        <end position="304"/>
    </location>
</feature>
<protein>
    <recommendedName>
        <fullName evidence="1">Recombination-associated protein RdgC</fullName>
    </recommendedName>
</protein>
<gene>
    <name evidence="1" type="primary">rdgC</name>
    <name type="ordered locus">Bphy_4738</name>
</gene>
<sequence>MWFKNLQLHRLPAPWKVSVEQMEKWLAPHAFQPANSVETTRQGWTSPRNNGSLVYSINQQMLITYRAEKKLLPASVVTQVTKARALELEEQQGFKPGRKQMRDLKEQVTDELLPRAFSIQRDTRVWIDTVNGWLVIDAASQALGDDVLGLLVKSVDRLPISSVRVAQAPVAAMTNWLLAGEGPVNFTLDQDTELRSPAEGNATVRYVGHALEADDMRRHIEAGKQCMRLAMTWNDRVSFVMTPSLTIKRVTALDVIKEASDPTAQNDDEQFDSDFTLMTGELAKLFDGVVDALGGELDEGSKAA</sequence>